<reference key="1">
    <citation type="journal article" date="2010" name="PLoS Genet.">
        <title>Genome sequence of the plant growth promoting endophytic bacterium Enterobacter sp. 638.</title>
        <authorList>
            <person name="Taghavi S."/>
            <person name="van der Lelie D."/>
            <person name="Hoffman A."/>
            <person name="Zhang Y.B."/>
            <person name="Walla M.D."/>
            <person name="Vangronsveld J."/>
            <person name="Newman L."/>
            <person name="Monchy S."/>
        </authorList>
    </citation>
    <scope>NUCLEOTIDE SEQUENCE [LARGE SCALE GENOMIC DNA]</scope>
    <source>
        <strain>638</strain>
    </source>
</reference>
<organism>
    <name type="scientific">Enterobacter sp. (strain 638)</name>
    <dbReference type="NCBI Taxonomy" id="399742"/>
    <lineage>
        <taxon>Bacteria</taxon>
        <taxon>Pseudomonadati</taxon>
        <taxon>Pseudomonadota</taxon>
        <taxon>Gammaproteobacteria</taxon>
        <taxon>Enterobacterales</taxon>
        <taxon>Enterobacteriaceae</taxon>
        <taxon>Enterobacter</taxon>
    </lineage>
</organism>
<gene>
    <name evidence="1" type="primary">ribH</name>
    <name type="ordered locus">Ent638_0883</name>
</gene>
<evidence type="ECO:0000255" key="1">
    <source>
        <dbReference type="HAMAP-Rule" id="MF_00178"/>
    </source>
</evidence>
<keyword id="KW-0686">Riboflavin biosynthesis</keyword>
<keyword id="KW-0808">Transferase</keyword>
<dbReference type="EC" id="2.5.1.78" evidence="1"/>
<dbReference type="EMBL" id="CP000653">
    <property type="protein sequence ID" value="ABP59567.1"/>
    <property type="molecule type" value="Genomic_DNA"/>
</dbReference>
<dbReference type="RefSeq" id="WP_012016288.1">
    <property type="nucleotide sequence ID" value="NC_009436.1"/>
</dbReference>
<dbReference type="SMR" id="A4W787"/>
<dbReference type="STRING" id="399742.Ent638_0883"/>
<dbReference type="KEGG" id="ent:Ent638_0883"/>
<dbReference type="eggNOG" id="COG0054">
    <property type="taxonomic scope" value="Bacteria"/>
</dbReference>
<dbReference type="HOGENOM" id="CLU_089358_1_1_6"/>
<dbReference type="OrthoDB" id="9809709at2"/>
<dbReference type="UniPathway" id="UPA00275">
    <property type="reaction ID" value="UER00404"/>
</dbReference>
<dbReference type="Proteomes" id="UP000000230">
    <property type="component" value="Chromosome"/>
</dbReference>
<dbReference type="GO" id="GO:0005829">
    <property type="term" value="C:cytosol"/>
    <property type="evidence" value="ECO:0007669"/>
    <property type="project" value="TreeGrafter"/>
</dbReference>
<dbReference type="GO" id="GO:0009349">
    <property type="term" value="C:riboflavin synthase complex"/>
    <property type="evidence" value="ECO:0007669"/>
    <property type="project" value="InterPro"/>
</dbReference>
<dbReference type="GO" id="GO:0000906">
    <property type="term" value="F:6,7-dimethyl-8-ribityllumazine synthase activity"/>
    <property type="evidence" value="ECO:0007669"/>
    <property type="project" value="UniProtKB-UniRule"/>
</dbReference>
<dbReference type="GO" id="GO:0009231">
    <property type="term" value="P:riboflavin biosynthetic process"/>
    <property type="evidence" value="ECO:0007669"/>
    <property type="project" value="UniProtKB-UniRule"/>
</dbReference>
<dbReference type="CDD" id="cd09209">
    <property type="entry name" value="Lumazine_synthase-I"/>
    <property type="match status" value="1"/>
</dbReference>
<dbReference type="FunFam" id="3.40.50.960:FF:000001">
    <property type="entry name" value="6,7-dimethyl-8-ribityllumazine synthase"/>
    <property type="match status" value="1"/>
</dbReference>
<dbReference type="Gene3D" id="3.40.50.960">
    <property type="entry name" value="Lumazine/riboflavin synthase"/>
    <property type="match status" value="1"/>
</dbReference>
<dbReference type="HAMAP" id="MF_00178">
    <property type="entry name" value="Lumazine_synth"/>
    <property type="match status" value="1"/>
</dbReference>
<dbReference type="InterPro" id="IPR034964">
    <property type="entry name" value="LS"/>
</dbReference>
<dbReference type="InterPro" id="IPR002180">
    <property type="entry name" value="LS/RS"/>
</dbReference>
<dbReference type="InterPro" id="IPR036467">
    <property type="entry name" value="LS/RS_sf"/>
</dbReference>
<dbReference type="NCBIfam" id="TIGR00114">
    <property type="entry name" value="lumazine-synth"/>
    <property type="match status" value="1"/>
</dbReference>
<dbReference type="NCBIfam" id="NF000812">
    <property type="entry name" value="PRK00061.1-4"/>
    <property type="match status" value="1"/>
</dbReference>
<dbReference type="PANTHER" id="PTHR21058:SF0">
    <property type="entry name" value="6,7-DIMETHYL-8-RIBITYLLUMAZINE SYNTHASE"/>
    <property type="match status" value="1"/>
</dbReference>
<dbReference type="PANTHER" id="PTHR21058">
    <property type="entry name" value="6,7-DIMETHYL-8-RIBITYLLUMAZINE SYNTHASE DMRL SYNTHASE LUMAZINE SYNTHASE"/>
    <property type="match status" value="1"/>
</dbReference>
<dbReference type="Pfam" id="PF00885">
    <property type="entry name" value="DMRL_synthase"/>
    <property type="match status" value="1"/>
</dbReference>
<dbReference type="SUPFAM" id="SSF52121">
    <property type="entry name" value="Lumazine synthase"/>
    <property type="match status" value="1"/>
</dbReference>
<feature type="chain" id="PRO_1000058368" description="6,7-dimethyl-8-ribityllumazine synthase">
    <location>
        <begin position="1"/>
        <end position="156"/>
    </location>
</feature>
<feature type="active site" description="Proton donor" evidence="1">
    <location>
        <position position="89"/>
    </location>
</feature>
<feature type="binding site" evidence="1">
    <location>
        <position position="22"/>
    </location>
    <ligand>
        <name>5-amino-6-(D-ribitylamino)uracil</name>
        <dbReference type="ChEBI" id="CHEBI:15934"/>
    </ligand>
</feature>
<feature type="binding site" evidence="1">
    <location>
        <begin position="57"/>
        <end position="59"/>
    </location>
    <ligand>
        <name>5-amino-6-(D-ribitylamino)uracil</name>
        <dbReference type="ChEBI" id="CHEBI:15934"/>
    </ligand>
</feature>
<feature type="binding site" evidence="1">
    <location>
        <begin position="81"/>
        <end position="83"/>
    </location>
    <ligand>
        <name>5-amino-6-(D-ribitylamino)uracil</name>
        <dbReference type="ChEBI" id="CHEBI:15934"/>
    </ligand>
</feature>
<feature type="binding site" evidence="1">
    <location>
        <begin position="86"/>
        <end position="87"/>
    </location>
    <ligand>
        <name>(2S)-2-hydroxy-3-oxobutyl phosphate</name>
        <dbReference type="ChEBI" id="CHEBI:58830"/>
    </ligand>
</feature>
<feature type="binding site" evidence="1">
    <location>
        <position position="114"/>
    </location>
    <ligand>
        <name>5-amino-6-(D-ribitylamino)uracil</name>
        <dbReference type="ChEBI" id="CHEBI:15934"/>
    </ligand>
</feature>
<feature type="binding site" evidence="1">
    <location>
        <position position="128"/>
    </location>
    <ligand>
        <name>(2S)-2-hydroxy-3-oxobutyl phosphate</name>
        <dbReference type="ChEBI" id="CHEBI:58830"/>
    </ligand>
</feature>
<protein>
    <recommendedName>
        <fullName evidence="1">6,7-dimethyl-8-ribityllumazine synthase</fullName>
        <shortName evidence="1">DMRL synthase</shortName>
        <shortName evidence="1">LS</shortName>
        <shortName evidence="1">Lumazine synthase</shortName>
        <ecNumber evidence="1">2.5.1.78</ecNumber>
    </recommendedName>
</protein>
<accession>A4W787</accession>
<proteinExistence type="inferred from homology"/>
<comment type="function">
    <text evidence="1">Catalyzes the formation of 6,7-dimethyl-8-ribityllumazine by condensation of 5-amino-6-(D-ribitylamino)uracil with 3,4-dihydroxy-2-butanone 4-phosphate. This is the penultimate step in the biosynthesis of riboflavin.</text>
</comment>
<comment type="catalytic activity">
    <reaction evidence="1">
        <text>(2S)-2-hydroxy-3-oxobutyl phosphate + 5-amino-6-(D-ribitylamino)uracil = 6,7-dimethyl-8-(1-D-ribityl)lumazine + phosphate + 2 H2O + H(+)</text>
        <dbReference type="Rhea" id="RHEA:26152"/>
        <dbReference type="ChEBI" id="CHEBI:15377"/>
        <dbReference type="ChEBI" id="CHEBI:15378"/>
        <dbReference type="ChEBI" id="CHEBI:15934"/>
        <dbReference type="ChEBI" id="CHEBI:43474"/>
        <dbReference type="ChEBI" id="CHEBI:58201"/>
        <dbReference type="ChEBI" id="CHEBI:58830"/>
        <dbReference type="EC" id="2.5.1.78"/>
    </reaction>
</comment>
<comment type="pathway">
    <text evidence="1">Cofactor biosynthesis; riboflavin biosynthesis; riboflavin from 2-hydroxy-3-oxobutyl phosphate and 5-amino-6-(D-ribitylamino)uracil: step 1/2.</text>
</comment>
<comment type="subunit">
    <text evidence="1">Forms an icosahedral capsid composed of 60 subunits, arranged as a dodecamer of pentamers.</text>
</comment>
<comment type="similarity">
    <text evidence="1">Belongs to the DMRL synthase family.</text>
</comment>
<sequence>MNIIEAAVATPDARVAITIARFNNFINDSLLDGAIDALKRIGQVKDENITVVWVPGAYELPLAAGALAKTGKYDAVIALGTVIRGGTAHFEYVAGGASNGLAHVAQEAEIPVAFGVLTTESIEQAIERAGTKAGNKGAEAALTALEMINVLKAIKA</sequence>
<name>RISB_ENT38</name>